<accession>Q3MHZ1</accession>
<comment type="function">
    <text evidence="5">Probable acetyltransferase.</text>
</comment>
<comment type="function">
    <text evidence="2">May act as a transcription factor regulating the expression of coproporphyrinogen oxidase by binding to a promoter regulatory element.</text>
</comment>
<comment type="subcellular location">
    <subcellularLocation>
        <location evidence="1">Membrane</location>
        <topology evidence="1">Single-pass membrane protein</topology>
    </subcellularLocation>
</comment>
<comment type="similarity">
    <text evidence="5">Belongs to the camello family.</text>
</comment>
<feature type="chain" id="PRO_0000307785" description="Probable N-acetyltransferase 14">
    <location>
        <begin position="1"/>
        <end position="206"/>
    </location>
</feature>
<feature type="transmembrane region" description="Helical" evidence="3">
    <location>
        <begin position="57"/>
        <end position="77"/>
    </location>
</feature>
<feature type="domain" description="N-acetyltransferase" evidence="4">
    <location>
        <begin position="55"/>
        <end position="206"/>
    </location>
</feature>
<sequence>MAPSHLSVREMREDEKPLVLEMLKAGVKDTENRVALHALTRPPALLLLAAASSGLRFVLASFALALLLPVFLAVAAMKLGLRARWGSLPPPGGLGGPWVAVRGSGDVCGVLALAPGSSAGDGARVTRLSVSRWHRRRGVGRRLLAFAESRARAWAGGMGEPRARLVVPVAVAAWGVAGMLEGCGYQAEGSWGCMGYTLVREFSKEL</sequence>
<keyword id="KW-0010">Activator</keyword>
<keyword id="KW-0012">Acyltransferase</keyword>
<keyword id="KW-0238">DNA-binding</keyword>
<keyword id="KW-0472">Membrane</keyword>
<keyword id="KW-1185">Reference proteome</keyword>
<keyword id="KW-0804">Transcription</keyword>
<keyword id="KW-0805">Transcription regulation</keyword>
<keyword id="KW-0808">Transferase</keyword>
<keyword id="KW-0812">Transmembrane</keyword>
<keyword id="KW-1133">Transmembrane helix</keyword>
<gene>
    <name evidence="2" type="primary">NAT14</name>
</gene>
<name>NAT14_BOVIN</name>
<proteinExistence type="evidence at transcript level"/>
<protein>
    <recommendedName>
        <fullName>Probable N-acetyltransferase 14</fullName>
        <ecNumber evidence="5">2.3.1.-</ecNumber>
    </recommendedName>
</protein>
<evidence type="ECO:0000250" key="1"/>
<evidence type="ECO:0000250" key="2">
    <source>
        <dbReference type="UniProtKB" id="Q8WUY8"/>
    </source>
</evidence>
<evidence type="ECO:0000255" key="3"/>
<evidence type="ECO:0000255" key="4">
    <source>
        <dbReference type="PROSITE-ProRule" id="PRU00532"/>
    </source>
</evidence>
<evidence type="ECO:0000305" key="5"/>
<dbReference type="EC" id="2.3.1.-" evidence="5"/>
<dbReference type="EMBL" id="BC104515">
    <property type="protein sequence ID" value="AAI04516.1"/>
    <property type="molecule type" value="mRNA"/>
</dbReference>
<dbReference type="RefSeq" id="NP_001032322.1">
    <property type="nucleotide sequence ID" value="NM_001037245.1"/>
</dbReference>
<dbReference type="RefSeq" id="XP_005219762.1">
    <property type="nucleotide sequence ID" value="XM_005219705.5"/>
</dbReference>
<dbReference type="RefSeq" id="XP_010813786.1">
    <property type="nucleotide sequence ID" value="XM_010815484.4"/>
</dbReference>
<dbReference type="FunCoup" id="Q3MHZ1">
    <property type="interactions" value="1074"/>
</dbReference>
<dbReference type="STRING" id="9913.ENSBTAP00000025357"/>
<dbReference type="PaxDb" id="9913-ENSBTAP00000025357"/>
<dbReference type="GeneID" id="532809"/>
<dbReference type="KEGG" id="bta:532809"/>
<dbReference type="CTD" id="57106"/>
<dbReference type="VEuPathDB" id="HostDB:ENSBTAG00000019051"/>
<dbReference type="eggNOG" id="ENOG502RYNT">
    <property type="taxonomic scope" value="Eukaryota"/>
</dbReference>
<dbReference type="HOGENOM" id="CLU_127402_0_0_1"/>
<dbReference type="InParanoid" id="Q3MHZ1"/>
<dbReference type="OMA" id="PWVAVWG"/>
<dbReference type="OrthoDB" id="41532at2759"/>
<dbReference type="TreeFam" id="TF336981"/>
<dbReference type="Proteomes" id="UP000009136">
    <property type="component" value="Chromosome 18"/>
</dbReference>
<dbReference type="Bgee" id="ENSBTAG00000019051">
    <property type="expression patterns" value="Expressed in retina and 101 other cell types or tissues"/>
</dbReference>
<dbReference type="GO" id="GO:0016020">
    <property type="term" value="C:membrane"/>
    <property type="evidence" value="ECO:0007669"/>
    <property type="project" value="UniProtKB-SubCell"/>
</dbReference>
<dbReference type="GO" id="GO:0003677">
    <property type="term" value="F:DNA binding"/>
    <property type="evidence" value="ECO:0007669"/>
    <property type="project" value="UniProtKB-KW"/>
</dbReference>
<dbReference type="GO" id="GO:0008080">
    <property type="term" value="F:N-acetyltransferase activity"/>
    <property type="evidence" value="ECO:0000318"/>
    <property type="project" value="GO_Central"/>
</dbReference>
<dbReference type="Gene3D" id="3.40.630.30">
    <property type="match status" value="1"/>
</dbReference>
<dbReference type="InterPro" id="IPR016181">
    <property type="entry name" value="Acyl_CoA_acyltransferase"/>
</dbReference>
<dbReference type="InterPro" id="IPR000182">
    <property type="entry name" value="GNAT_dom"/>
</dbReference>
<dbReference type="InterPro" id="IPR050769">
    <property type="entry name" value="NAT_camello-type"/>
</dbReference>
<dbReference type="PANTHER" id="PTHR13947">
    <property type="entry name" value="GNAT FAMILY N-ACETYLTRANSFERASE"/>
    <property type="match status" value="1"/>
</dbReference>
<dbReference type="PANTHER" id="PTHR13947:SF51">
    <property type="entry name" value="N-ACETYLTRANSFERASE 14-RELATED"/>
    <property type="match status" value="1"/>
</dbReference>
<dbReference type="Pfam" id="PF00583">
    <property type="entry name" value="Acetyltransf_1"/>
    <property type="match status" value="1"/>
</dbReference>
<dbReference type="SUPFAM" id="SSF55729">
    <property type="entry name" value="Acyl-CoA N-acyltransferases (Nat)"/>
    <property type="match status" value="1"/>
</dbReference>
<dbReference type="PROSITE" id="PS51186">
    <property type="entry name" value="GNAT"/>
    <property type="match status" value="1"/>
</dbReference>
<reference key="1">
    <citation type="submission" date="2005-09" db="EMBL/GenBank/DDBJ databases">
        <authorList>
            <consortium name="NIH - Mammalian Gene Collection (MGC) project"/>
        </authorList>
    </citation>
    <scope>NUCLEOTIDE SEQUENCE [LARGE SCALE MRNA]</scope>
    <source>
        <strain>Hereford</strain>
        <tissue>Uterus</tissue>
    </source>
</reference>
<organism>
    <name type="scientific">Bos taurus</name>
    <name type="common">Bovine</name>
    <dbReference type="NCBI Taxonomy" id="9913"/>
    <lineage>
        <taxon>Eukaryota</taxon>
        <taxon>Metazoa</taxon>
        <taxon>Chordata</taxon>
        <taxon>Craniata</taxon>
        <taxon>Vertebrata</taxon>
        <taxon>Euteleostomi</taxon>
        <taxon>Mammalia</taxon>
        <taxon>Eutheria</taxon>
        <taxon>Laurasiatheria</taxon>
        <taxon>Artiodactyla</taxon>
        <taxon>Ruminantia</taxon>
        <taxon>Pecora</taxon>
        <taxon>Bovidae</taxon>
        <taxon>Bovinae</taxon>
        <taxon>Bos</taxon>
    </lineage>
</organism>